<proteinExistence type="inferred from homology"/>
<comment type="function">
    <text evidence="1">Negative regulator of class I heat shock genes (grpE-dnaK-dnaJ and groELS operons). Prevents heat-shock induction of these operons.</text>
</comment>
<comment type="similarity">
    <text evidence="1">Belongs to the HrcA family.</text>
</comment>
<reference key="1">
    <citation type="journal article" date="2004" name="Genome Res.">
        <title>The genome sequence of Mycoplasma mycoides subsp. mycoides SC type strain PG1T, the causative agent of contagious bovine pleuropneumonia (CBPP).</title>
        <authorList>
            <person name="Westberg J."/>
            <person name="Persson A."/>
            <person name="Holmberg A."/>
            <person name="Goesmann A."/>
            <person name="Lundeberg J."/>
            <person name="Johansson K.-E."/>
            <person name="Pettersson B."/>
            <person name="Uhlen M."/>
        </authorList>
    </citation>
    <scope>NUCLEOTIDE SEQUENCE [LARGE SCALE GENOMIC DNA]</scope>
    <source>
        <strain>CCUG 32753 / NCTC 10114 / PG1</strain>
    </source>
</reference>
<dbReference type="EMBL" id="BX293980">
    <property type="protein sequence ID" value="CAE77234.1"/>
    <property type="molecule type" value="Genomic_DNA"/>
</dbReference>
<dbReference type="RefSeq" id="NP_975592.1">
    <property type="nucleotide sequence ID" value="NC_005364.2"/>
</dbReference>
<dbReference type="RefSeq" id="WP_011166788.1">
    <property type="nucleotide sequence ID" value="NC_005364.2"/>
</dbReference>
<dbReference type="SMR" id="Q6MT04"/>
<dbReference type="STRING" id="272632.MSC_0612"/>
<dbReference type="KEGG" id="mmy:MSC_0612"/>
<dbReference type="PATRIC" id="fig|272632.4.peg.659"/>
<dbReference type="eggNOG" id="COG1420">
    <property type="taxonomic scope" value="Bacteria"/>
</dbReference>
<dbReference type="HOGENOM" id="CLU_050019_1_0_14"/>
<dbReference type="Proteomes" id="UP000001016">
    <property type="component" value="Chromosome"/>
</dbReference>
<dbReference type="GO" id="GO:0003677">
    <property type="term" value="F:DNA binding"/>
    <property type="evidence" value="ECO:0007669"/>
    <property type="project" value="InterPro"/>
</dbReference>
<dbReference type="GO" id="GO:0045892">
    <property type="term" value="P:negative regulation of DNA-templated transcription"/>
    <property type="evidence" value="ECO:0007669"/>
    <property type="project" value="UniProtKB-UniRule"/>
</dbReference>
<dbReference type="Gene3D" id="3.30.450.40">
    <property type="match status" value="1"/>
</dbReference>
<dbReference type="Gene3D" id="3.30.390.60">
    <property type="entry name" value="Heat-inducible transcription repressor hrca homolog, domain 3"/>
    <property type="match status" value="1"/>
</dbReference>
<dbReference type="Gene3D" id="1.10.10.10">
    <property type="entry name" value="Winged helix-like DNA-binding domain superfamily/Winged helix DNA-binding domain"/>
    <property type="match status" value="1"/>
</dbReference>
<dbReference type="HAMAP" id="MF_00081">
    <property type="entry name" value="HrcA"/>
    <property type="match status" value="1"/>
</dbReference>
<dbReference type="InterPro" id="IPR029016">
    <property type="entry name" value="GAF-like_dom_sf"/>
</dbReference>
<dbReference type="InterPro" id="IPR002571">
    <property type="entry name" value="HrcA"/>
</dbReference>
<dbReference type="InterPro" id="IPR021153">
    <property type="entry name" value="HrcA_C"/>
</dbReference>
<dbReference type="InterPro" id="IPR036388">
    <property type="entry name" value="WH-like_DNA-bd_sf"/>
</dbReference>
<dbReference type="InterPro" id="IPR036390">
    <property type="entry name" value="WH_DNA-bd_sf"/>
</dbReference>
<dbReference type="InterPro" id="IPR023120">
    <property type="entry name" value="WHTH_transcript_rep_HrcA_IDD"/>
</dbReference>
<dbReference type="NCBIfam" id="TIGR00331">
    <property type="entry name" value="hrcA"/>
    <property type="match status" value="1"/>
</dbReference>
<dbReference type="PANTHER" id="PTHR34824">
    <property type="entry name" value="HEAT-INDUCIBLE TRANSCRIPTION REPRESSOR HRCA"/>
    <property type="match status" value="1"/>
</dbReference>
<dbReference type="PANTHER" id="PTHR34824:SF1">
    <property type="entry name" value="HEAT-INDUCIBLE TRANSCRIPTION REPRESSOR HRCA"/>
    <property type="match status" value="1"/>
</dbReference>
<dbReference type="Pfam" id="PF01628">
    <property type="entry name" value="HrcA"/>
    <property type="match status" value="1"/>
</dbReference>
<dbReference type="PIRSF" id="PIRSF005485">
    <property type="entry name" value="HrcA"/>
    <property type="match status" value="1"/>
</dbReference>
<dbReference type="SUPFAM" id="SSF55781">
    <property type="entry name" value="GAF domain-like"/>
    <property type="match status" value="1"/>
</dbReference>
<dbReference type="SUPFAM" id="SSF46785">
    <property type="entry name" value="Winged helix' DNA-binding domain"/>
    <property type="match status" value="1"/>
</dbReference>
<feature type="chain" id="PRO_0000182507" description="Heat-inducible transcription repressor HrcA">
    <location>
        <begin position="1"/>
        <end position="340"/>
    </location>
</feature>
<name>HRCA_MYCMS</name>
<keyword id="KW-1185">Reference proteome</keyword>
<keyword id="KW-0678">Repressor</keyword>
<keyword id="KW-0346">Stress response</keyword>
<keyword id="KW-0804">Transcription</keyword>
<keyword id="KW-0805">Transcription regulation</keyword>
<protein>
    <recommendedName>
        <fullName evidence="1">Heat-inducible transcription repressor HrcA</fullName>
    </recommendedName>
</protein>
<gene>
    <name evidence="1" type="primary">hrcA</name>
    <name type="ordered locus">MSC_0612</name>
</gene>
<sequence>MLTNRQIKILQTIVEEFIKTNQPVGSKRILELLNMKISSATIRNESATLEHEGYLEKQHTSSGRTPSTKGYRYYVDNIMKLDSADYTRLKIYLNQLLDLRKYDIDKTINYASEIISELTKMTAVVIKKQNIKDIKLKKIELILLSEFLASVLFIFSDGDVQNKMFNLKDVALSDLKIAIKLFSDVLVDVKLDEIDQYLNDLKHQLFLSIKQYDYVLNTFINTILESKNEQKETHGMRYMLENPEFNDTNKLKNAVKLVEQLSPFDWFNIAYESNKNMNKIAIKIGNEIDQINDDISMIATELKIGNSSTVLTLVGPKRVDYNQVNQLMNLIIEIINTKEN</sequence>
<accession>Q6MT04</accession>
<evidence type="ECO:0000255" key="1">
    <source>
        <dbReference type="HAMAP-Rule" id="MF_00081"/>
    </source>
</evidence>
<organism>
    <name type="scientific">Mycoplasma mycoides subsp. mycoides SC (strain CCUG 32753 / NCTC 10114 / PG1)</name>
    <dbReference type="NCBI Taxonomy" id="272632"/>
    <lineage>
        <taxon>Bacteria</taxon>
        <taxon>Bacillati</taxon>
        <taxon>Mycoplasmatota</taxon>
        <taxon>Mollicutes</taxon>
        <taxon>Mycoplasmataceae</taxon>
        <taxon>Mycoplasma</taxon>
    </lineage>
</organism>